<proteinExistence type="evidence at protein level"/>
<dbReference type="EC" id="1.-.-.-"/>
<dbReference type="EMBL" id="KZ293696">
    <property type="protein sequence ID" value="PBK84745.1"/>
    <property type="molecule type" value="Genomic_DNA"/>
</dbReference>
<dbReference type="SMR" id="A0A2H3CNY6"/>
<dbReference type="STRING" id="47427.A0A2H3CNY6"/>
<dbReference type="InParanoid" id="A0A2H3CNY6"/>
<dbReference type="OMA" id="EAMINAP"/>
<dbReference type="OrthoDB" id="2789670at2759"/>
<dbReference type="Proteomes" id="UP000217790">
    <property type="component" value="Unassembled WGS sequence"/>
</dbReference>
<dbReference type="GO" id="GO:0016020">
    <property type="term" value="C:membrane"/>
    <property type="evidence" value="ECO:0007669"/>
    <property type="project" value="UniProtKB-SubCell"/>
</dbReference>
<dbReference type="GO" id="GO:0020037">
    <property type="term" value="F:heme binding"/>
    <property type="evidence" value="ECO:0007669"/>
    <property type="project" value="InterPro"/>
</dbReference>
<dbReference type="GO" id="GO:0005506">
    <property type="term" value="F:iron ion binding"/>
    <property type="evidence" value="ECO:0007669"/>
    <property type="project" value="InterPro"/>
</dbReference>
<dbReference type="GO" id="GO:0004497">
    <property type="term" value="F:monooxygenase activity"/>
    <property type="evidence" value="ECO:0007669"/>
    <property type="project" value="UniProtKB-KW"/>
</dbReference>
<dbReference type="GO" id="GO:0016705">
    <property type="term" value="F:oxidoreductase activity, acting on paired donors, with incorporation or reduction of molecular oxygen"/>
    <property type="evidence" value="ECO:0007669"/>
    <property type="project" value="InterPro"/>
</dbReference>
<dbReference type="CDD" id="cd11065">
    <property type="entry name" value="CYP64-like"/>
    <property type="match status" value="1"/>
</dbReference>
<dbReference type="Gene3D" id="1.10.630.10">
    <property type="entry name" value="Cytochrome P450"/>
    <property type="match status" value="1"/>
</dbReference>
<dbReference type="InterPro" id="IPR001128">
    <property type="entry name" value="Cyt_P450"/>
</dbReference>
<dbReference type="InterPro" id="IPR017972">
    <property type="entry name" value="Cyt_P450_CS"/>
</dbReference>
<dbReference type="InterPro" id="IPR002401">
    <property type="entry name" value="Cyt_P450_E_grp-I"/>
</dbReference>
<dbReference type="InterPro" id="IPR036396">
    <property type="entry name" value="Cyt_P450_sf"/>
</dbReference>
<dbReference type="InterPro" id="IPR050364">
    <property type="entry name" value="Cytochrome_P450_fung"/>
</dbReference>
<dbReference type="PANTHER" id="PTHR46300:SF7">
    <property type="entry name" value="P450, PUTATIVE (EUROFUNG)-RELATED"/>
    <property type="match status" value="1"/>
</dbReference>
<dbReference type="PANTHER" id="PTHR46300">
    <property type="entry name" value="P450, PUTATIVE (EUROFUNG)-RELATED-RELATED"/>
    <property type="match status" value="1"/>
</dbReference>
<dbReference type="Pfam" id="PF00067">
    <property type="entry name" value="p450"/>
    <property type="match status" value="1"/>
</dbReference>
<dbReference type="PRINTS" id="PR00463">
    <property type="entry name" value="EP450I"/>
</dbReference>
<dbReference type="PRINTS" id="PR00385">
    <property type="entry name" value="P450"/>
</dbReference>
<dbReference type="SUPFAM" id="SSF48264">
    <property type="entry name" value="Cytochrome P450"/>
    <property type="match status" value="1"/>
</dbReference>
<dbReference type="PROSITE" id="PS00086">
    <property type="entry name" value="CYTOCHROME_P450"/>
    <property type="match status" value="1"/>
</dbReference>
<name>ARMP1_ARMGA</name>
<organism>
    <name type="scientific">Armillaria gallica</name>
    <name type="common">Bulbous honey fungus</name>
    <name type="synonym">Armillaria bulbosa</name>
    <dbReference type="NCBI Taxonomy" id="47427"/>
    <lineage>
        <taxon>Eukaryota</taxon>
        <taxon>Fungi</taxon>
        <taxon>Dikarya</taxon>
        <taxon>Basidiomycota</taxon>
        <taxon>Agaricomycotina</taxon>
        <taxon>Agaricomycetes</taxon>
        <taxon>Agaricomycetidae</taxon>
        <taxon>Agaricales</taxon>
        <taxon>Marasmiineae</taxon>
        <taxon>Physalacriaceae</taxon>
        <taxon>Armillaria</taxon>
    </lineage>
</organism>
<keyword id="KW-0325">Glycoprotein</keyword>
<keyword id="KW-0349">Heme</keyword>
<keyword id="KW-0408">Iron</keyword>
<keyword id="KW-0472">Membrane</keyword>
<keyword id="KW-0479">Metal-binding</keyword>
<keyword id="KW-0503">Monooxygenase</keyword>
<keyword id="KW-0560">Oxidoreductase</keyword>
<keyword id="KW-1185">Reference proteome</keyword>
<keyword id="KW-0812">Transmembrane</keyword>
<keyword id="KW-1133">Transmembrane helix</keyword>
<sequence>MDSASLAVVVWAILLVLWLRRIFGQRSSLPLPPAPPGYPVIGNLLDLANNDVHIRARHWSRNFDDDVISLKVLGKTMIILNSPTAVSDLFDKRASNYSDRPDMPMIVDFIGWDWTFALMRYGPRWKEHRRVFNNHFNIGTSGASEDRHIQLRICRELLSLMFQSPSKYLENLRHYTGHIILKRTYGHTVVDEEDPYIRLVEAASQSTSEAAVPGAFLVDLFPSMKYIPEWFPGAQFKRKAREWRKLSEAMINAPYDMAKGKFDEGNAEACFVSACLEQNKTASGQGLSEELIKDTAAVAYAAGADTSVSTLTTFILAMTLYPDVQKAAQAELDALLGGERLPDFGDKTRLPYVTAILKEVLRWIPVLPMAVPHRAVNADTYKGYYIPAGAFVYGNAWAILHNPDIFADPETFRPDRFIENPTLLNPIDNGVFGFGRRACAGRVMALDTMWIAMASILAVFDISKAVDERGNEITPPVKLSPGTISHPAPFPCIIKPRSKAALELITQDD</sequence>
<accession>A0A2H3CNY6</accession>
<evidence type="ECO:0000250" key="1">
    <source>
        <dbReference type="UniProtKB" id="I3ZNU9"/>
    </source>
</evidence>
<evidence type="ECO:0000250" key="2">
    <source>
        <dbReference type="UniProtKB" id="P04798"/>
    </source>
</evidence>
<evidence type="ECO:0000255" key="3"/>
<evidence type="ECO:0000255" key="4">
    <source>
        <dbReference type="PROSITE-ProRule" id="PRU00498"/>
    </source>
</evidence>
<evidence type="ECO:0000269" key="5">
    <source>
    </source>
</evidence>
<evidence type="ECO:0000269" key="6">
    <source>
    </source>
</evidence>
<evidence type="ECO:0000269" key="7">
    <source>
    </source>
</evidence>
<evidence type="ECO:0000269" key="8">
    <source>
    </source>
</evidence>
<evidence type="ECO:0000269" key="9">
    <source>
    </source>
</evidence>
<evidence type="ECO:0000269" key="10">
    <source>
    </source>
</evidence>
<evidence type="ECO:0000269" key="11">
    <source>
    </source>
</evidence>
<evidence type="ECO:0000269" key="12">
    <source>
    </source>
</evidence>
<evidence type="ECO:0000269" key="13">
    <source>
    </source>
</evidence>
<evidence type="ECO:0000305" key="14"/>
<evidence type="ECO:0000305" key="15">
    <source>
    </source>
</evidence>
<comment type="function">
    <text evidence="1 5 14">Cytochrome P450 monooxygenase, part of the gene cluster that mediates the biosynthesis of melleolides, a range of antifungal and phytotoxic polyketide derivatives composed of an orsellinic acid (OA) moiety esterified to various sesquiterpene alcohols (Probable). The first step in melleolides biosynthesis is performed by the delta(6)-protoilludene synthase PRO1 which catalyzes the cyclization of farnesyl diphosphate to protoilludene (PubMed:21148562). The orsellinic acid synthase armB produces OA by condensing acetyl-CoA with 3 malonyl-CoA units in a three-round chain elongation reaction folowed by a C2-C7 ring closure (By similarity). ArmB further catalyzes the trans-esterification of OA to the various sesquiterpene alcohols resulting from the hydroxylation of protoilludene (By similarity). The melleolides cluster also includes 5 cytochrome P450 monooxygenases, 4 NAD(+)-dependent oxidoreductases, one flavin-dependent oxidoreductase, and one O-methyltransferase (By similarity). The cytochrome P450 monooxygenases may be involved in protoilludene hydroxylation to elaborate melleolides with multiple alcohol groups, such as melleolide D, which carries alcohol functionalities at C-4, C-5, C-10, and C-13 (By similarity). The role of the NAD(+)-dependent enzymes remains unknown (By similarity). Numerous melleolides, including arnamial, show 5'-O-methylation of the aromatic moiety which may be catalyzed by the methyltransferase encoded in the cluster (By similarity). The flavin-dependent oxidoreductase might represent the dehydrogenase yielding the aldehyde in position 1 of arnamial and other melleolides (By similarity). Finally, several halogenase localized outside of the cluster, are able to catalyze the transfer of a single chlorine atom to the melleolide backbone, resulting in a 6'-chloromelleolide product (By similarity).</text>
</comment>
<comment type="cofactor">
    <cofactor evidence="2">
        <name>heme</name>
        <dbReference type="ChEBI" id="CHEBI:30413"/>
    </cofactor>
</comment>
<comment type="pathway">
    <text evidence="14">Secondary metabolite biosynthesis.</text>
</comment>
<comment type="subcellular location">
    <subcellularLocation>
        <location evidence="3">Membrane</location>
        <topology evidence="3">Single-pass membrane protein</topology>
    </subcellularLocation>
</comment>
<comment type="biotechnology">
    <text evidence="6 7 8 9 10 12">Melleolide sesquiterpene aryl esters are cytotoxic secondary products with anti-cancer potential (PubMed:21376582, PubMed:26952552). Armillaridin shows therapeutic and radiosensitizing effects on human esophageal cancer cells (PubMed:23864890). Armillaridin induces autophagy-associated cell death in human chronic myelogenous leukemia as well as of hepatocellular carcinoma cells (PubMed:27592257, PubMed:31488037). Armillaridin can also inhibit the differentiation and activation of human macrophages and thus might have potential to be developed as a biological response modifier for inflammatory diseases (PubMed:25746621).</text>
</comment>
<comment type="miscellaneous">
    <text evidence="11 13 15">Armillaria species are both devastating forest pathogens and some of the largest and oldest terrestrial organisms on Earth (Probable) (PubMed:31746694). They forage for hosts and achieve immense colony sizes via rhizomorphs, root-like multicellular structures of clonal dispersal (Probable). One genetic Armillaria gallica individual localized in Michigan's Upper Peninsula stands out as exceptionally large, covering hundreds of tree root systems over approximately 75 hectares of the forest floor (PubMed:30963893). Based on observed growth rates of the fungus, the minimum age of this large individual can be estimated as 2500 years (PubMed:30963893).</text>
</comment>
<comment type="similarity">
    <text evidence="14">Belongs to the cytochrome P450 family.</text>
</comment>
<reference key="1">
    <citation type="journal article" date="2017" name="Nat. Ecol. Evol.">
        <title>Genome expansion and lineage-specific genetic innovations in the forest pathogenic fungi Armillaria.</title>
        <authorList>
            <person name="Sipos G."/>
            <person name="Prasanna A.N."/>
            <person name="Walter M.C."/>
            <person name="O'Connor E."/>
            <person name="Balint B."/>
            <person name="Krizsan K."/>
            <person name="Kiss B."/>
            <person name="Hess J."/>
            <person name="Varga T."/>
            <person name="Slot J."/>
            <person name="Riley R."/>
            <person name="Boka B."/>
            <person name="Rigling D."/>
            <person name="Barry K."/>
            <person name="Lee J."/>
            <person name="Mihaltcheva S."/>
            <person name="LaButti K."/>
            <person name="Lipzen A."/>
            <person name="Waldron R."/>
            <person name="Moloney N.M."/>
            <person name="Sperisen C."/>
            <person name="Kredics L."/>
            <person name="Vagvoelgyi C."/>
            <person name="Patrignani A."/>
            <person name="Fitzpatrick D."/>
            <person name="Nagy I."/>
            <person name="Doyle S."/>
            <person name="Anderson J.B."/>
            <person name="Grigoriev I.V."/>
            <person name="Gueldener U."/>
            <person name="Muensterkoetter M."/>
            <person name="Nagy L.G."/>
        </authorList>
    </citation>
    <scope>NUCLEOTIDE SEQUENCE [LARGE SCALE GENOMIC DNA]</scope>
    <source>
        <strain>Ar21-2</strain>
    </source>
</reference>
<reference key="2">
    <citation type="journal article" date="2011" name="Bioorg. Med. Chem. Lett.">
        <title>In vitro cytotoxicity of melleolide antibiotics: structural and mechanistic aspects.</title>
        <authorList>
            <person name="Bohnert M."/>
            <person name="Miethbauer S."/>
            <person name="Dahse H.M."/>
            <person name="Ziemen J."/>
            <person name="Nett M."/>
            <person name="Hoffmeister D."/>
        </authorList>
    </citation>
    <scope>BIOTECHNOLOGY</scope>
</reference>
<reference key="3">
    <citation type="journal article" date="2011" name="J. Biol. Chem.">
        <title>Cloning and characterization of an Armillaria gallica cDNA encoding protoilludene synthase, which catalyzes the first committed step in the synthesis of antimicrobial melleolides.</title>
        <authorList>
            <person name="Engels B."/>
            <person name="Heinig U."/>
            <person name="Grothe T."/>
            <person name="Stadler M."/>
            <person name="Jennewein S."/>
        </authorList>
    </citation>
    <scope>FUNCTION</scope>
    <source>
        <strain>FU02472</strain>
    </source>
</reference>
<reference key="4">
    <citation type="journal article" date="2013" name="Evid. Based Complement Alternat. Med.">
        <title>Therapeutic and radiosensitizing effects of armillaridin on human esophageal cancer cells.</title>
        <authorList>
            <person name="Chi C.W."/>
            <person name="Chen C.C."/>
            <person name="Chen Y.J."/>
        </authorList>
    </citation>
    <scope>BIOTECHNOLOGY</scope>
</reference>
<reference key="5">
    <citation type="journal article" date="2015" name="Int. J. Med. Mushrooms">
        <title>Armillaridin, a honey medicinal mushroom, Armillaria mellea (higher basidiomycetes) component, inhibits differentiation and activation of human macrophages.</title>
        <authorList>
            <person name="Liu T.P."/>
            <person name="Chen C.C."/>
            <person name="Shiao P.Y."/>
            <person name="Shieh H.R."/>
            <person name="Chen Y.Y."/>
            <person name="Chen Y.J."/>
        </authorList>
    </citation>
    <scope>BIOTECHNOLOGY</scope>
</reference>
<reference key="6">
    <citation type="journal article" date="2016" name="J. Ethnopharmacol.">
        <title>Structure, cytotoxic activity and mechanism of protoilludane sesquiterpene aryl esters from the mycelium of Armillaria mellea.</title>
        <authorList>
            <person name="Li Z."/>
            <person name="Wang Y."/>
            <person name="Jiang B."/>
            <person name="Li W."/>
            <person name="Zheng L."/>
            <person name="Yang X."/>
            <person name="Bao Y."/>
            <person name="Sun L."/>
            <person name="Huang Y."/>
            <person name="Li Y."/>
        </authorList>
    </citation>
    <scope>BIOTECHNOLOGY</scope>
</reference>
<reference key="7">
    <citation type="journal article" date="2016" name="Tumor Biol.">
        <title>Armillaridin induces autophagy-associated cell death in human chronic myelogenous leukemia K562 cells.</title>
        <authorList>
            <person name="Chang W.H."/>
            <person name="Huang H.L."/>
            <person name="Huang W.P."/>
            <person name="Chen C.C."/>
            <person name="Chen Y.J."/>
        </authorList>
    </citation>
    <scope>BIOTECHNOLOGY</scope>
</reference>
<reference key="8">
    <citation type="journal article" date="2018" name="Curr. Biol.">
        <title>Armillaria.</title>
        <authorList>
            <person name="Sipos G."/>
            <person name="Anderson J.B."/>
            <person name="Nagy L.G."/>
        </authorList>
    </citation>
    <scope>MISCELLANEOUS</scope>
</reference>
<reference key="9">
    <citation type="journal article" date="2018" name="Proc. R. Soc. B">
        <title>Clonal evolution and genome stability in a 2500-year-old fungal individual.</title>
        <authorList>
            <person name="Anderson J.B."/>
            <person name="Bruhn J.N."/>
            <person name="Kasimer D."/>
            <person name="Wang H."/>
            <person name="Rodrigue N."/>
            <person name="Smith M.L."/>
        </authorList>
    </citation>
    <scope>MISCELLANEOUS</scope>
</reference>
<reference key="10">
    <citation type="journal article" date="2019" name="Am. J. Chin. Med.">
        <title>Induction of autophagic death of human hepatocellular carcinoma cells by armillaridin from Armillaria mellea.</title>
        <authorList>
            <person name="Leu Y.S."/>
            <person name="Chen Y.J."/>
            <person name="Chen C.C."/>
            <person name="Huang H.L."/>
        </authorList>
    </citation>
    <scope>BIOTECHNOLOGY</scope>
</reference>
<reference key="11">
    <citation type="journal article" date="2020" name="Plant Dis.">
        <title>Susceptibility of garden trees and shrubs to Armillaria root rot.</title>
        <authorList>
            <person name="Cromey M.G."/>
            <person name="Drakulic J."/>
            <person name="Beal E.J."/>
            <person name="Waghorn I.A.G."/>
            <person name="Perry J.N."/>
            <person name="Clover G.R.G."/>
        </authorList>
    </citation>
    <scope>MISCELLANEOUS</scope>
</reference>
<protein>
    <recommendedName>
        <fullName>Cytochrome P450 monooxygenase ARMGADRAFT_974139</fullName>
        <ecNumber>1.-.-.-</ecNumber>
    </recommendedName>
    <alternativeName>
        <fullName>Melleolide biosynthesis cluster protein ARMGADRAFT_974139</fullName>
    </alternativeName>
</protein>
<feature type="chain" id="PRO_0000449408" description="Cytochrome P450 monooxygenase ARMGADRAFT_974139">
    <location>
        <begin position="1"/>
        <end position="509"/>
    </location>
</feature>
<feature type="transmembrane region" description="Helical" evidence="3">
    <location>
        <begin position="4"/>
        <end position="24"/>
    </location>
</feature>
<feature type="binding site" description="axial binding residue" evidence="2">
    <location>
        <position position="439"/>
    </location>
    <ligand>
        <name>heme</name>
        <dbReference type="ChEBI" id="CHEBI:30413"/>
    </ligand>
    <ligandPart>
        <name>Fe</name>
        <dbReference type="ChEBI" id="CHEBI:18248"/>
    </ligandPart>
</feature>
<feature type="glycosylation site" description="N-linked (GlcNAc...) asparagine" evidence="4">
    <location>
        <position position="96"/>
    </location>
</feature>
<feature type="glycosylation site" description="N-linked (GlcNAc...) asparagine" evidence="4">
    <location>
        <position position="279"/>
    </location>
</feature>
<gene>
    <name type="ORF">ARMGADRAFT_974139</name>
</gene>